<organism>
    <name type="scientific">Mus musculus</name>
    <name type="common">Mouse</name>
    <dbReference type="NCBI Taxonomy" id="10090"/>
    <lineage>
        <taxon>Eukaryota</taxon>
        <taxon>Metazoa</taxon>
        <taxon>Chordata</taxon>
        <taxon>Craniata</taxon>
        <taxon>Vertebrata</taxon>
        <taxon>Euteleostomi</taxon>
        <taxon>Mammalia</taxon>
        <taxon>Eutheria</taxon>
        <taxon>Euarchontoglires</taxon>
        <taxon>Glires</taxon>
        <taxon>Rodentia</taxon>
        <taxon>Myomorpha</taxon>
        <taxon>Muroidea</taxon>
        <taxon>Muridae</taxon>
        <taxon>Murinae</taxon>
        <taxon>Mus</taxon>
        <taxon>Mus</taxon>
    </lineage>
</organism>
<feature type="chain" id="PRO_0000086650" description="Serine/threonine-protein kinase Sgk3">
    <location>
        <begin position="1"/>
        <end position="496"/>
    </location>
</feature>
<feature type="domain" description="PX" evidence="3">
    <location>
        <begin position="12"/>
        <end position="124"/>
    </location>
</feature>
<feature type="domain" description="Protein kinase" evidence="4">
    <location>
        <begin position="162"/>
        <end position="419"/>
    </location>
</feature>
<feature type="domain" description="AGC-kinase C-terminal" evidence="5">
    <location>
        <begin position="420"/>
        <end position="496"/>
    </location>
</feature>
<feature type="region of interest" description="Disordered" evidence="7">
    <location>
        <begin position="121"/>
        <end position="157"/>
    </location>
</feature>
<feature type="short sequence motif" description="Nuclear localization signal" evidence="1">
    <location>
        <begin position="195"/>
        <end position="205"/>
    </location>
</feature>
<feature type="compositionally biased region" description="Polar residues" evidence="7">
    <location>
        <begin position="139"/>
        <end position="151"/>
    </location>
</feature>
<feature type="active site" description="Proton acceptor" evidence="4 6">
    <location>
        <position position="286"/>
    </location>
</feature>
<feature type="binding site" evidence="4">
    <location>
        <begin position="168"/>
        <end position="176"/>
    </location>
    <ligand>
        <name>ATP</name>
        <dbReference type="ChEBI" id="CHEBI:30616"/>
    </ligand>
</feature>
<feature type="binding site" evidence="4">
    <location>
        <position position="191"/>
    </location>
    <ligand>
        <name>ATP</name>
        <dbReference type="ChEBI" id="CHEBI:30616"/>
    </ligand>
</feature>
<feature type="modified residue" description="Phosphoserine" evidence="16 17">
    <location>
        <position position="126"/>
    </location>
</feature>
<feature type="modified residue" description="Phosphoserine" evidence="16">
    <location>
        <position position="129"/>
    </location>
</feature>
<feature type="modified residue" description="Phosphothreonine; by PDPK1" evidence="2">
    <location>
        <position position="320"/>
    </location>
</feature>
<feature type="modified residue" description="Phosphoserine" evidence="2">
    <location>
        <position position="486"/>
    </location>
</feature>
<feature type="mutagenesis site" description="Diminishes binding to phosphoinositides." evidence="9">
    <original>R</original>
    <variation>A</variation>
    <location>
        <position position="90"/>
    </location>
</feature>
<feature type="mutagenesis site" description="No activity." evidence="8">
    <original>K</original>
    <variation>A</variation>
    <location>
        <position position="191"/>
    </location>
</feature>
<feature type="sequence conflict" description="In Ref. 2; BAC27349." evidence="15" ref="2">
    <original>R</original>
    <variation>G</variation>
    <location>
        <position position="114"/>
    </location>
</feature>
<feature type="sequence conflict" description="In Ref. 2; BAC27349." evidence="15" ref="2">
    <original>Q</original>
    <variation>P</variation>
    <location>
        <position position="204"/>
    </location>
</feature>
<feature type="strand" evidence="18">
    <location>
        <begin position="15"/>
        <end position="26"/>
    </location>
</feature>
<feature type="strand" evidence="18">
    <location>
        <begin position="29"/>
        <end position="40"/>
    </location>
</feature>
<feature type="strand" evidence="18">
    <location>
        <begin position="43"/>
        <end position="50"/>
    </location>
</feature>
<feature type="helix" evidence="18">
    <location>
        <begin position="51"/>
        <end position="64"/>
    </location>
</feature>
<feature type="helix" evidence="18">
    <location>
        <begin position="66"/>
        <end position="68"/>
    </location>
</feature>
<feature type="helix" evidence="18">
    <location>
        <begin position="84"/>
        <end position="101"/>
    </location>
</feature>
<feature type="helix" evidence="18">
    <location>
        <begin position="105"/>
        <end position="108"/>
    </location>
</feature>
<feature type="helix" evidence="18">
    <location>
        <begin position="111"/>
        <end position="116"/>
    </location>
</feature>
<feature type="turn" evidence="18">
    <location>
        <begin position="117"/>
        <end position="120"/>
    </location>
</feature>
<feature type="helix" evidence="18">
    <location>
        <begin position="122"/>
        <end position="124"/>
    </location>
</feature>
<keyword id="KW-0002">3D-structure</keyword>
<keyword id="KW-0067">ATP-binding</keyword>
<keyword id="KW-0968">Cytoplasmic vesicle</keyword>
<keyword id="KW-0967">Endosome</keyword>
<keyword id="KW-0418">Kinase</keyword>
<keyword id="KW-0547">Nucleotide-binding</keyword>
<keyword id="KW-0597">Phosphoprotein</keyword>
<keyword id="KW-1185">Reference proteome</keyword>
<keyword id="KW-0723">Serine/threonine-protein kinase</keyword>
<keyword id="KW-0808">Transferase</keyword>
<protein>
    <recommendedName>
        <fullName>Serine/threonine-protein kinase Sgk3</fullName>
        <ecNumber>2.7.11.1</ecNumber>
    </recommendedName>
    <alternativeName>
        <fullName>Cytokine-independent survival kinase</fullName>
    </alternativeName>
    <alternativeName>
        <fullName>Serum/glucocorticoid-regulated kinase 3</fullName>
    </alternativeName>
    <alternativeName>
        <fullName>Serum/glucocorticoid-regulated kinase-like</fullName>
    </alternativeName>
</protein>
<name>SGK3_MOUSE</name>
<evidence type="ECO:0000250" key="1"/>
<evidence type="ECO:0000250" key="2">
    <source>
        <dbReference type="UniProtKB" id="Q96BR1"/>
    </source>
</evidence>
<evidence type="ECO:0000255" key="3">
    <source>
        <dbReference type="PROSITE-ProRule" id="PRU00147"/>
    </source>
</evidence>
<evidence type="ECO:0000255" key="4">
    <source>
        <dbReference type="PROSITE-ProRule" id="PRU00159"/>
    </source>
</evidence>
<evidence type="ECO:0000255" key="5">
    <source>
        <dbReference type="PROSITE-ProRule" id="PRU00618"/>
    </source>
</evidence>
<evidence type="ECO:0000255" key="6">
    <source>
        <dbReference type="PROSITE-ProRule" id="PRU10027"/>
    </source>
</evidence>
<evidence type="ECO:0000256" key="7">
    <source>
        <dbReference type="SAM" id="MobiDB-lite"/>
    </source>
</evidence>
<evidence type="ECO:0000269" key="8">
    <source>
    </source>
</evidence>
<evidence type="ECO:0000269" key="9">
    <source>
    </source>
</evidence>
<evidence type="ECO:0000269" key="10">
    <source>
    </source>
</evidence>
<evidence type="ECO:0000269" key="11">
    <source>
    </source>
</evidence>
<evidence type="ECO:0000269" key="12">
    <source>
    </source>
</evidence>
<evidence type="ECO:0000269" key="13">
    <source>
    </source>
</evidence>
<evidence type="ECO:0000269" key="14">
    <source>
    </source>
</evidence>
<evidence type="ECO:0000305" key="15"/>
<evidence type="ECO:0007744" key="16">
    <source>
    </source>
</evidence>
<evidence type="ECO:0007744" key="17">
    <source>
    </source>
</evidence>
<evidence type="ECO:0007829" key="18">
    <source>
        <dbReference type="PDB" id="1XTE"/>
    </source>
</evidence>
<reference key="1">
    <citation type="journal article" date="2000" name="Curr. Biol.">
        <title>Identification of CISK, a new member of the SGK kinase family that promotes IL-3-dependent survival.</title>
        <authorList>
            <person name="Liu D."/>
            <person name="Yang X."/>
            <person name="Songyang Z."/>
        </authorList>
    </citation>
    <scope>NUCLEOTIDE SEQUENCE [MRNA]</scope>
    <scope>MUTAGENESIS OF LYS-191</scope>
</reference>
<reference key="2">
    <citation type="journal article" date="2005" name="Science">
        <title>The transcriptional landscape of the mammalian genome.</title>
        <authorList>
            <person name="Carninci P."/>
            <person name="Kasukawa T."/>
            <person name="Katayama S."/>
            <person name="Gough J."/>
            <person name="Frith M.C."/>
            <person name="Maeda N."/>
            <person name="Oyama R."/>
            <person name="Ravasi T."/>
            <person name="Lenhard B."/>
            <person name="Wells C."/>
            <person name="Kodzius R."/>
            <person name="Shimokawa K."/>
            <person name="Bajic V.B."/>
            <person name="Brenner S.E."/>
            <person name="Batalov S."/>
            <person name="Forrest A.R."/>
            <person name="Zavolan M."/>
            <person name="Davis M.J."/>
            <person name="Wilming L.G."/>
            <person name="Aidinis V."/>
            <person name="Allen J.E."/>
            <person name="Ambesi-Impiombato A."/>
            <person name="Apweiler R."/>
            <person name="Aturaliya R.N."/>
            <person name="Bailey T.L."/>
            <person name="Bansal M."/>
            <person name="Baxter L."/>
            <person name="Beisel K.W."/>
            <person name="Bersano T."/>
            <person name="Bono H."/>
            <person name="Chalk A.M."/>
            <person name="Chiu K.P."/>
            <person name="Choudhary V."/>
            <person name="Christoffels A."/>
            <person name="Clutterbuck D.R."/>
            <person name="Crowe M.L."/>
            <person name="Dalla E."/>
            <person name="Dalrymple B.P."/>
            <person name="de Bono B."/>
            <person name="Della Gatta G."/>
            <person name="di Bernardo D."/>
            <person name="Down T."/>
            <person name="Engstrom P."/>
            <person name="Fagiolini M."/>
            <person name="Faulkner G."/>
            <person name="Fletcher C.F."/>
            <person name="Fukushima T."/>
            <person name="Furuno M."/>
            <person name="Futaki S."/>
            <person name="Gariboldi M."/>
            <person name="Georgii-Hemming P."/>
            <person name="Gingeras T.R."/>
            <person name="Gojobori T."/>
            <person name="Green R.E."/>
            <person name="Gustincich S."/>
            <person name="Harbers M."/>
            <person name="Hayashi Y."/>
            <person name="Hensch T.K."/>
            <person name="Hirokawa N."/>
            <person name="Hill D."/>
            <person name="Huminiecki L."/>
            <person name="Iacono M."/>
            <person name="Ikeo K."/>
            <person name="Iwama A."/>
            <person name="Ishikawa T."/>
            <person name="Jakt M."/>
            <person name="Kanapin A."/>
            <person name="Katoh M."/>
            <person name="Kawasawa Y."/>
            <person name="Kelso J."/>
            <person name="Kitamura H."/>
            <person name="Kitano H."/>
            <person name="Kollias G."/>
            <person name="Krishnan S.P."/>
            <person name="Kruger A."/>
            <person name="Kummerfeld S.K."/>
            <person name="Kurochkin I.V."/>
            <person name="Lareau L.F."/>
            <person name="Lazarevic D."/>
            <person name="Lipovich L."/>
            <person name="Liu J."/>
            <person name="Liuni S."/>
            <person name="McWilliam S."/>
            <person name="Madan Babu M."/>
            <person name="Madera M."/>
            <person name="Marchionni L."/>
            <person name="Matsuda H."/>
            <person name="Matsuzawa S."/>
            <person name="Miki H."/>
            <person name="Mignone F."/>
            <person name="Miyake S."/>
            <person name="Morris K."/>
            <person name="Mottagui-Tabar S."/>
            <person name="Mulder N."/>
            <person name="Nakano N."/>
            <person name="Nakauchi H."/>
            <person name="Ng P."/>
            <person name="Nilsson R."/>
            <person name="Nishiguchi S."/>
            <person name="Nishikawa S."/>
            <person name="Nori F."/>
            <person name="Ohara O."/>
            <person name="Okazaki Y."/>
            <person name="Orlando V."/>
            <person name="Pang K.C."/>
            <person name="Pavan W.J."/>
            <person name="Pavesi G."/>
            <person name="Pesole G."/>
            <person name="Petrovsky N."/>
            <person name="Piazza S."/>
            <person name="Reed J."/>
            <person name="Reid J.F."/>
            <person name="Ring B.Z."/>
            <person name="Ringwald M."/>
            <person name="Rost B."/>
            <person name="Ruan Y."/>
            <person name="Salzberg S.L."/>
            <person name="Sandelin A."/>
            <person name="Schneider C."/>
            <person name="Schoenbach C."/>
            <person name="Sekiguchi K."/>
            <person name="Semple C.A."/>
            <person name="Seno S."/>
            <person name="Sessa L."/>
            <person name="Sheng Y."/>
            <person name="Shibata Y."/>
            <person name="Shimada H."/>
            <person name="Shimada K."/>
            <person name="Silva D."/>
            <person name="Sinclair B."/>
            <person name="Sperling S."/>
            <person name="Stupka E."/>
            <person name="Sugiura K."/>
            <person name="Sultana R."/>
            <person name="Takenaka Y."/>
            <person name="Taki K."/>
            <person name="Tammoja K."/>
            <person name="Tan S.L."/>
            <person name="Tang S."/>
            <person name="Taylor M.S."/>
            <person name="Tegner J."/>
            <person name="Teichmann S.A."/>
            <person name="Ueda H.R."/>
            <person name="van Nimwegen E."/>
            <person name="Verardo R."/>
            <person name="Wei C.L."/>
            <person name="Yagi K."/>
            <person name="Yamanishi H."/>
            <person name="Zabarovsky E."/>
            <person name="Zhu S."/>
            <person name="Zimmer A."/>
            <person name="Hide W."/>
            <person name="Bult C."/>
            <person name="Grimmond S.M."/>
            <person name="Teasdale R.D."/>
            <person name="Liu E.T."/>
            <person name="Brusic V."/>
            <person name="Quackenbush J."/>
            <person name="Wahlestedt C."/>
            <person name="Mattick J.S."/>
            <person name="Hume D.A."/>
            <person name="Kai C."/>
            <person name="Sasaki D."/>
            <person name="Tomaru Y."/>
            <person name="Fukuda S."/>
            <person name="Kanamori-Katayama M."/>
            <person name="Suzuki M."/>
            <person name="Aoki J."/>
            <person name="Arakawa T."/>
            <person name="Iida J."/>
            <person name="Imamura K."/>
            <person name="Itoh M."/>
            <person name="Kato T."/>
            <person name="Kawaji H."/>
            <person name="Kawagashira N."/>
            <person name="Kawashima T."/>
            <person name="Kojima M."/>
            <person name="Kondo S."/>
            <person name="Konno H."/>
            <person name="Nakano K."/>
            <person name="Ninomiya N."/>
            <person name="Nishio T."/>
            <person name="Okada M."/>
            <person name="Plessy C."/>
            <person name="Shibata K."/>
            <person name="Shiraki T."/>
            <person name="Suzuki S."/>
            <person name="Tagami M."/>
            <person name="Waki K."/>
            <person name="Watahiki A."/>
            <person name="Okamura-Oho Y."/>
            <person name="Suzuki H."/>
            <person name="Kawai J."/>
            <person name="Hayashizaki Y."/>
        </authorList>
    </citation>
    <scope>NUCLEOTIDE SEQUENCE [LARGE SCALE MRNA]</scope>
    <source>
        <strain>C57BL/6J</strain>
        <strain>NOD</strain>
        <tissue>Amnion</tissue>
        <tissue>Bone marrow</tissue>
        <tissue>Forelimb</tissue>
        <tissue>Spleen</tissue>
    </source>
</reference>
<reference key="3">
    <citation type="journal article" date="2001" name="J. Cell Biol.">
        <title>Regulation of cytokine-independent survival kinase (CISK) by the Phox homology domain and phosphoinositides.</title>
        <authorList>
            <person name="Xu J."/>
            <person name="Liu D."/>
            <person name="Gill G."/>
            <person name="Songyang Z."/>
        </authorList>
    </citation>
    <scope>CHARACTERIZATION</scope>
    <scope>MUTAGENESIS OF ARG-90</scope>
</reference>
<reference key="4">
    <citation type="journal article" date="2005" name="J. Physiol. (Lond.)">
        <title>Regulation of GluR1 abundance in murine hippocampal neurones by serum- and glucocorticoid-inducible kinase 3.</title>
        <authorList>
            <person name="Strutz-Seebohm N."/>
            <person name="Seebohm G."/>
            <person name="Mack A.F."/>
            <person name="Wagner H.J."/>
            <person name="Just L."/>
            <person name="Skutella T."/>
            <person name="Lang U.E."/>
            <person name="Henke G."/>
            <person name="Striegel M."/>
            <person name="Hollmann M."/>
            <person name="Rouach N."/>
            <person name="Nicoll R.A."/>
            <person name="McCormick J.A."/>
            <person name="Wang J."/>
            <person name="Pearce D."/>
            <person name="Lang F."/>
        </authorList>
    </citation>
    <scope>FUNCTION IN THE REGULATION OF GRIA1/GLUR1</scope>
</reference>
<reference key="5">
    <citation type="journal article" date="2005" name="J. Physiol. (Lond.)">
        <title>Glucocorticoid adrenal steroids and glucocorticoid-inducible kinase isoforms in the regulation of GluR6 expression.</title>
        <authorList>
            <person name="Strutz-Seebohm N."/>
            <person name="Seebohm G."/>
            <person name="Shumilina E."/>
            <person name="Mack A.F."/>
            <person name="Wagner H.J."/>
            <person name="Lampert A."/>
            <person name="Grahammer F."/>
            <person name="Henke G."/>
            <person name="Just L."/>
            <person name="Skutella T."/>
            <person name="Hollmann M."/>
            <person name="Lang F."/>
        </authorList>
    </citation>
    <scope>FUNCTION IN THE REGULATION OF GRIK2/GLUR6</scope>
</reference>
<reference key="6">
    <citation type="journal article" date="2009" name="Immunity">
        <title>The phagosomal proteome in interferon-gamma-activated macrophages.</title>
        <authorList>
            <person name="Trost M."/>
            <person name="English L."/>
            <person name="Lemieux S."/>
            <person name="Courcelles M."/>
            <person name="Desjardins M."/>
            <person name="Thibault P."/>
        </authorList>
    </citation>
    <scope>PHOSPHORYLATION [LARGE SCALE ANALYSIS] AT SER-126 AND SER-129</scope>
    <scope>IDENTIFICATION BY MASS SPECTROMETRY [LARGE SCALE ANALYSIS]</scope>
</reference>
<reference key="7">
    <citation type="journal article" date="2010" name="Cell">
        <title>A tissue-specific atlas of mouse protein phosphorylation and expression.</title>
        <authorList>
            <person name="Huttlin E.L."/>
            <person name="Jedrychowski M.P."/>
            <person name="Elias J.E."/>
            <person name="Goswami T."/>
            <person name="Rad R."/>
            <person name="Beausoleil S.A."/>
            <person name="Villen J."/>
            <person name="Haas W."/>
            <person name="Sowa M.E."/>
            <person name="Gygi S.P."/>
        </authorList>
    </citation>
    <scope>PHOSPHORYLATION [LARGE SCALE ANALYSIS] AT SER-126</scope>
    <scope>IDENTIFICATION BY MASS SPECTROMETRY [LARGE SCALE ANALYSIS]</scope>
    <source>
        <tissue>Testis</tissue>
    </source>
</reference>
<reference key="8">
    <citation type="journal article" date="2011" name="J. Gastroenterol.">
        <title>Regulation of gastric acid secretion by the serum and glucocorticoid inducible kinase isoform SGK3.</title>
        <authorList>
            <person name="Pasham V."/>
            <person name="Rotte A."/>
            <person name="Bhandaru M."/>
            <person name="Eichenmueller M."/>
            <person name="Froehlich H."/>
            <person name="Mack A.F."/>
            <person name="Bobbala D."/>
            <person name="Yang W."/>
            <person name="Pearce D."/>
            <person name="Lang F."/>
        </authorList>
    </citation>
    <scope>FUNCTION</scope>
</reference>
<reference key="9">
    <citation type="journal article" date="2011" name="Kidney Int.">
        <title>Decreased bone density and increased phosphaturia in gene-targeted mice lacking functional serum- and glucocorticoid-inducible kinase 3.</title>
        <authorList>
            <person name="Bhandaru M."/>
            <person name="Kempe D.S."/>
            <person name="Rotte A."/>
            <person name="Capuano P."/>
            <person name="Pathare G."/>
            <person name="Sopjani M."/>
            <person name="Alesutan I."/>
            <person name="Tyan L."/>
            <person name="Huang D.Y."/>
            <person name="Siraskar B."/>
            <person name="Judenhofer M.S."/>
            <person name="Stange G."/>
            <person name="Pichler B.J."/>
            <person name="Biber J."/>
            <person name="Quintanilla-Martinez L."/>
            <person name="Wagner C.A."/>
            <person name="Pearce D."/>
            <person name="Foeller M."/>
            <person name="Lang F."/>
        </authorList>
    </citation>
    <scope>FUNCTION</scope>
</reference>
<reference key="10">
    <citation type="journal article" date="2011" name="Mol. Biol. Cell">
        <title>Serum- and glucocorticoid-induced kinase 3 in recycling endosomes mediates acute activation of Na+/H+ exchanger NHE3 by glucocorticoids.</title>
        <authorList>
            <person name="He P."/>
            <person name="Lee S.J."/>
            <person name="Lin S."/>
            <person name="Seidler U."/>
            <person name="Lang F."/>
            <person name="Fejes-Toth G."/>
            <person name="Naray-Fejes-Toth A."/>
            <person name="Yun C.C."/>
        </authorList>
    </citation>
    <scope>FUNCTION IN THE REGULATION OF SLC9A3/NHE3</scope>
    <scope>SUBCELLULAR LOCATION</scope>
</reference>
<dbReference type="EC" id="2.7.11.1"/>
<dbReference type="EMBL" id="AF312007">
    <property type="protein sequence ID" value="AAG34115.1"/>
    <property type="molecule type" value="mRNA"/>
</dbReference>
<dbReference type="EMBL" id="AK030314">
    <property type="protein sequence ID" value="BAC26895.1"/>
    <property type="molecule type" value="mRNA"/>
</dbReference>
<dbReference type="EMBL" id="AK031133">
    <property type="protein sequence ID" value="BAC27269.1"/>
    <property type="molecule type" value="mRNA"/>
</dbReference>
<dbReference type="EMBL" id="AK031328">
    <property type="protein sequence ID" value="BAC27349.1"/>
    <property type="molecule type" value="mRNA"/>
</dbReference>
<dbReference type="EMBL" id="AK146561">
    <property type="protein sequence ID" value="BAE27261.1"/>
    <property type="molecule type" value="mRNA"/>
</dbReference>
<dbReference type="EMBL" id="AK151181">
    <property type="protein sequence ID" value="BAE30182.1"/>
    <property type="molecule type" value="mRNA"/>
</dbReference>
<dbReference type="EMBL" id="AK171120">
    <property type="protein sequence ID" value="BAE42262.1"/>
    <property type="molecule type" value="mRNA"/>
</dbReference>
<dbReference type="EMBL" id="AK171186">
    <property type="protein sequence ID" value="BAE42298.1"/>
    <property type="molecule type" value="mRNA"/>
</dbReference>
<dbReference type="EMBL" id="AK171959">
    <property type="protein sequence ID" value="BAE42748.1"/>
    <property type="molecule type" value="mRNA"/>
</dbReference>
<dbReference type="EMBL" id="AK172323">
    <property type="protein sequence ID" value="BAE42945.1"/>
    <property type="molecule type" value="mRNA"/>
</dbReference>
<dbReference type="CCDS" id="CCDS14816.1"/>
<dbReference type="RefSeq" id="NP_001032848.1">
    <property type="nucleotide sequence ID" value="NM_001037759.1"/>
</dbReference>
<dbReference type="RefSeq" id="NP_573483.1">
    <property type="nucleotide sequence ID" value="NM_133220.2"/>
</dbReference>
<dbReference type="RefSeq" id="NP_808215.2">
    <property type="nucleotide sequence ID" value="NM_177547.3"/>
</dbReference>
<dbReference type="PDB" id="1XTE">
    <property type="method" value="X-ray"/>
    <property type="resolution" value="1.60 A"/>
    <property type="chains" value="A=7-160"/>
</dbReference>
<dbReference type="PDB" id="1XTN">
    <property type="method" value="X-ray"/>
    <property type="resolution" value="2.20 A"/>
    <property type="chains" value="A/B=7-126"/>
</dbReference>
<dbReference type="PDBsum" id="1XTE"/>
<dbReference type="PDBsum" id="1XTN"/>
<dbReference type="SMR" id="Q9ERE3"/>
<dbReference type="BioGRID" id="228417">
    <property type="interactions" value="1"/>
</dbReference>
<dbReference type="CORUM" id="Q9ERE3"/>
<dbReference type="ELM" id="Q9ERE3"/>
<dbReference type="FunCoup" id="Q9ERE3">
    <property type="interactions" value="1566"/>
</dbReference>
<dbReference type="STRING" id="10090.ENSMUSP00000126861"/>
<dbReference type="iPTMnet" id="Q9ERE3"/>
<dbReference type="PhosphoSitePlus" id="Q9ERE3"/>
<dbReference type="PaxDb" id="10090-ENSMUSP00000126861"/>
<dbReference type="ProteomicsDB" id="261336"/>
<dbReference type="DNASU" id="170755"/>
<dbReference type="Ensembl" id="ENSMUST00000097826.6">
    <property type="protein sequence ID" value="ENSMUSP00000095437.5"/>
    <property type="gene ID" value="ENSMUSG00000025915.15"/>
</dbReference>
<dbReference type="Ensembl" id="ENSMUST00000166384.8">
    <property type="protein sequence ID" value="ENSMUSP00000130078.2"/>
    <property type="gene ID" value="ENSMUSG00000025915.15"/>
</dbReference>
<dbReference type="Ensembl" id="ENSMUST00000168907.8">
    <property type="protein sequence ID" value="ENSMUSP00000126861.2"/>
    <property type="gene ID" value="ENSMUSG00000025915.15"/>
</dbReference>
<dbReference type="Ensembl" id="ENSMUST00000171265.8">
    <property type="protein sequence ID" value="ENSMUSP00000127462.2"/>
    <property type="gene ID" value="ENSMUSG00000025915.15"/>
</dbReference>
<dbReference type="GeneID" id="170755"/>
<dbReference type="KEGG" id="mmu:170755"/>
<dbReference type="UCSC" id="uc007agu.1">
    <property type="organism name" value="mouse"/>
</dbReference>
<dbReference type="AGR" id="MGI:2182368"/>
<dbReference type="CTD" id="23678"/>
<dbReference type="MGI" id="MGI:2182368">
    <property type="gene designation" value="Sgk3"/>
</dbReference>
<dbReference type="VEuPathDB" id="HostDB:ENSMUSG00000025915"/>
<dbReference type="eggNOG" id="KOG0598">
    <property type="taxonomic scope" value="Eukaryota"/>
</dbReference>
<dbReference type="eggNOG" id="KOG2101">
    <property type="taxonomic scope" value="Eukaryota"/>
</dbReference>
<dbReference type="GeneTree" id="ENSGT00940000153776"/>
<dbReference type="HOGENOM" id="CLU_000288_63_48_1"/>
<dbReference type="InParanoid" id="Q9ERE3"/>
<dbReference type="OMA" id="CAYFIFR"/>
<dbReference type="OrthoDB" id="63267at2759"/>
<dbReference type="PhylomeDB" id="Q9ERE3"/>
<dbReference type="TreeFam" id="TF320906"/>
<dbReference type="Reactome" id="R-MMU-2672351">
    <property type="pathway name" value="Stimuli-sensing channels"/>
</dbReference>
<dbReference type="BioGRID-ORCS" id="170755">
    <property type="hits" value="0 hits in 80 CRISPR screens"/>
</dbReference>
<dbReference type="ChiTaRS" id="Sgk3">
    <property type="organism name" value="mouse"/>
</dbReference>
<dbReference type="EvolutionaryTrace" id="Q9ERE3"/>
<dbReference type="PRO" id="PR:Q9ERE3"/>
<dbReference type="Proteomes" id="UP000000589">
    <property type="component" value="Chromosome 1"/>
</dbReference>
<dbReference type="RNAct" id="Q9ERE3">
    <property type="molecule type" value="protein"/>
</dbReference>
<dbReference type="Bgee" id="ENSMUSG00000025915">
    <property type="expression patterns" value="Expressed in vestibular membrane of cochlear duct and 255 other cell types or tissues"/>
</dbReference>
<dbReference type="ExpressionAtlas" id="Q9ERE3">
    <property type="expression patterns" value="baseline and differential"/>
</dbReference>
<dbReference type="GO" id="GO:0031410">
    <property type="term" value="C:cytoplasmic vesicle"/>
    <property type="evidence" value="ECO:0000314"/>
    <property type="project" value="MGI"/>
</dbReference>
<dbReference type="GO" id="GO:0005769">
    <property type="term" value="C:early endosome"/>
    <property type="evidence" value="ECO:0007669"/>
    <property type="project" value="UniProtKB-SubCell"/>
</dbReference>
<dbReference type="GO" id="GO:0055037">
    <property type="term" value="C:recycling endosome"/>
    <property type="evidence" value="ECO:0007669"/>
    <property type="project" value="UniProtKB-SubCell"/>
</dbReference>
<dbReference type="GO" id="GO:0005524">
    <property type="term" value="F:ATP binding"/>
    <property type="evidence" value="ECO:0007669"/>
    <property type="project" value="UniProtKB-KW"/>
</dbReference>
<dbReference type="GO" id="GO:0060090">
    <property type="term" value="F:molecular adaptor activity"/>
    <property type="evidence" value="ECO:0000269"/>
    <property type="project" value="DisProt"/>
</dbReference>
<dbReference type="GO" id="GO:0035091">
    <property type="term" value="F:phosphatidylinositol binding"/>
    <property type="evidence" value="ECO:0007669"/>
    <property type="project" value="InterPro"/>
</dbReference>
<dbReference type="GO" id="GO:0106310">
    <property type="term" value="F:protein serine kinase activity"/>
    <property type="evidence" value="ECO:0007669"/>
    <property type="project" value="RHEA"/>
</dbReference>
<dbReference type="GO" id="GO:0004674">
    <property type="term" value="F:protein serine/threonine kinase activity"/>
    <property type="evidence" value="ECO:0000314"/>
    <property type="project" value="MGI"/>
</dbReference>
<dbReference type="GO" id="GO:2001240">
    <property type="term" value="P:negative regulation of extrinsic apoptotic signaling pathway in absence of ligand"/>
    <property type="evidence" value="ECO:0000314"/>
    <property type="project" value="MGI"/>
</dbReference>
<dbReference type="CDD" id="cd06870">
    <property type="entry name" value="PX_CISK"/>
    <property type="match status" value="1"/>
</dbReference>
<dbReference type="CDD" id="cd05604">
    <property type="entry name" value="STKc_SGK3"/>
    <property type="match status" value="1"/>
</dbReference>
<dbReference type="DisProt" id="DP02635"/>
<dbReference type="FunFam" id="1.10.510.10:FF:000065">
    <property type="entry name" value="Non-specific serine/threonine protein kinase"/>
    <property type="match status" value="1"/>
</dbReference>
<dbReference type="FunFam" id="3.30.1520.10:FF:000018">
    <property type="entry name" value="Non-specific serine/threonine protein kinase"/>
    <property type="match status" value="1"/>
</dbReference>
<dbReference type="FunFam" id="3.30.200.20:FF:000030">
    <property type="entry name" value="Non-specific serine/threonine protein kinase"/>
    <property type="match status" value="1"/>
</dbReference>
<dbReference type="Gene3D" id="3.30.200.20">
    <property type="entry name" value="Phosphorylase Kinase, domain 1"/>
    <property type="match status" value="1"/>
</dbReference>
<dbReference type="Gene3D" id="3.30.1520.10">
    <property type="entry name" value="Phox-like domain"/>
    <property type="match status" value="1"/>
</dbReference>
<dbReference type="Gene3D" id="1.10.510.10">
    <property type="entry name" value="Transferase(Phosphotransferase) domain 1"/>
    <property type="match status" value="1"/>
</dbReference>
<dbReference type="InterPro" id="IPR000961">
    <property type="entry name" value="AGC-kinase_C"/>
</dbReference>
<dbReference type="InterPro" id="IPR037900">
    <property type="entry name" value="CISK_PX"/>
</dbReference>
<dbReference type="InterPro" id="IPR011009">
    <property type="entry name" value="Kinase-like_dom_sf"/>
</dbReference>
<dbReference type="InterPro" id="IPR017892">
    <property type="entry name" value="Pkinase_C"/>
</dbReference>
<dbReference type="InterPro" id="IPR000719">
    <property type="entry name" value="Prot_kinase_dom"/>
</dbReference>
<dbReference type="InterPro" id="IPR017441">
    <property type="entry name" value="Protein_kinase_ATP_BS"/>
</dbReference>
<dbReference type="InterPro" id="IPR001683">
    <property type="entry name" value="PX_dom"/>
</dbReference>
<dbReference type="InterPro" id="IPR036871">
    <property type="entry name" value="PX_dom_sf"/>
</dbReference>
<dbReference type="InterPro" id="IPR008271">
    <property type="entry name" value="Ser/Thr_kinase_AS"/>
</dbReference>
<dbReference type="InterPro" id="IPR037709">
    <property type="entry name" value="SGK3_dom"/>
</dbReference>
<dbReference type="PANTHER" id="PTHR24351">
    <property type="entry name" value="RIBOSOMAL PROTEIN S6 KINASE"/>
    <property type="match status" value="1"/>
</dbReference>
<dbReference type="Pfam" id="PF00069">
    <property type="entry name" value="Pkinase"/>
    <property type="match status" value="1"/>
</dbReference>
<dbReference type="Pfam" id="PF00433">
    <property type="entry name" value="Pkinase_C"/>
    <property type="match status" value="1"/>
</dbReference>
<dbReference type="Pfam" id="PF00787">
    <property type="entry name" value="PX"/>
    <property type="match status" value="1"/>
</dbReference>
<dbReference type="SMART" id="SM00312">
    <property type="entry name" value="PX"/>
    <property type="match status" value="1"/>
</dbReference>
<dbReference type="SMART" id="SM00133">
    <property type="entry name" value="S_TK_X"/>
    <property type="match status" value="1"/>
</dbReference>
<dbReference type="SMART" id="SM00220">
    <property type="entry name" value="S_TKc"/>
    <property type="match status" value="1"/>
</dbReference>
<dbReference type="SUPFAM" id="SSF56112">
    <property type="entry name" value="Protein kinase-like (PK-like)"/>
    <property type="match status" value="1"/>
</dbReference>
<dbReference type="SUPFAM" id="SSF64268">
    <property type="entry name" value="PX domain"/>
    <property type="match status" value="1"/>
</dbReference>
<dbReference type="PROSITE" id="PS51285">
    <property type="entry name" value="AGC_KINASE_CTER"/>
    <property type="match status" value="1"/>
</dbReference>
<dbReference type="PROSITE" id="PS00107">
    <property type="entry name" value="PROTEIN_KINASE_ATP"/>
    <property type="match status" value="1"/>
</dbReference>
<dbReference type="PROSITE" id="PS50011">
    <property type="entry name" value="PROTEIN_KINASE_DOM"/>
    <property type="match status" value="1"/>
</dbReference>
<dbReference type="PROSITE" id="PS00108">
    <property type="entry name" value="PROTEIN_KINASE_ST"/>
    <property type="match status" value="1"/>
</dbReference>
<dbReference type="PROSITE" id="PS50195">
    <property type="entry name" value="PX"/>
    <property type="match status" value="1"/>
</dbReference>
<proteinExistence type="evidence at protein level"/>
<sequence length="496" mass="57145">MQRDCIMDYKESCPSVSIPSSDEHREKKKRFTVYKVLVSVGRSEWFVFRRYAEFDKLYNSLKKQFPAMALKIPAKRIFGDNFDPDFIKQRRAGLNEFIQNLVRYPELYNHPDVRAFLQMDSPRHQSDPSEDEDERSTSKPHSTSRNINLGPTGNPHAKPTDFDFLKVIGKGSFGKVLLAKRKLDGKFYAVKVLQKKIVLNRKEQKHIMAERNVLLKNVKHPFLVGLHYSFQTTEKLYFVLDFVNGGELFFHLQRERSFPEPRARFYAAEIASALGYLHSIKIVYRDLKPENILLDSMGHVVLTDFGLCKEGIAISDTTTTFCGTPEYLAPEVIRKQPYDNTVDWWCLGAVLYEMLYGLPPFYCRDVAEMYDNILHKPLNLRPGVSLTAWSILEELLEKNRQNRLGAKEDFLEIQNHPFFESLSWTDLVQKKIPPPFNPNVAGPDDIRNFDAVFTEETVPYSVCVSSDYSIVNASVLEADDAFVGFSYAPPSEDLFL</sequence>
<gene>
    <name type="primary">Sgk3</name>
    <name type="synonym">Cisk</name>
    <name type="synonym">Sgkl</name>
</gene>
<accession>Q9ERE3</accession>
<accession>Q3UAY2</accession>
<comment type="function">
    <text evidence="10 11 12 13 14">Serine/threonine-protein kinase which is involved in the regulation of a wide variety of ion channels, membrane transporters, cell growth, proliferation, survival and migration. Up-regulates Na(+) channels: SCNN1A/ENAC and SCN5A, K(+) channels: KCNA3/KV1.3, KCNE1, KCNQ1 and KCNH2/HERG, epithelial Ca(2+) channels: TRPV5 and TRPV6, chloride channel: BSND, creatine transporter: SLC6A8, Na(+)/dicarboxylate cotransporter: SLC13A2/NADC1, Na(+)-dependent phosphate cotransporter: SLC34A2/NAPI-2B, amino acid transporters: SLC1A5/ASCT2 and SLC6A19, glutamate transporters: SLC1A3/EAAT1, SLC1A6/EAAT4 and SLC1A7/EAAT5, glutamate receptors: GRIA1/GLUR1 and GRIK2/GLUR6, Na(+)/H(+) exchanger: SLC9A3/NHE3, and the Na(+)/K(+) ATPase. Plays a role in the regulation of renal tubular phosphate transport and bone density. Phosphorylates NEDD4L and GSK3B. Positively regulates ER transcription activity through phosphorylation of FLII. Negatively regulates the function of ITCH/AIP4 via its phosphorylation and thereby prevents CXCR4 from being efficiently sorted to lysosomes.</text>
</comment>
<comment type="catalytic activity">
    <reaction>
        <text>L-seryl-[protein] + ATP = O-phospho-L-seryl-[protein] + ADP + H(+)</text>
        <dbReference type="Rhea" id="RHEA:17989"/>
        <dbReference type="Rhea" id="RHEA-COMP:9863"/>
        <dbReference type="Rhea" id="RHEA-COMP:11604"/>
        <dbReference type="ChEBI" id="CHEBI:15378"/>
        <dbReference type="ChEBI" id="CHEBI:29999"/>
        <dbReference type="ChEBI" id="CHEBI:30616"/>
        <dbReference type="ChEBI" id="CHEBI:83421"/>
        <dbReference type="ChEBI" id="CHEBI:456216"/>
        <dbReference type="EC" id="2.7.11.1"/>
    </reaction>
</comment>
<comment type="catalytic activity">
    <reaction>
        <text>L-threonyl-[protein] + ATP = O-phospho-L-threonyl-[protein] + ADP + H(+)</text>
        <dbReference type="Rhea" id="RHEA:46608"/>
        <dbReference type="Rhea" id="RHEA-COMP:11060"/>
        <dbReference type="Rhea" id="RHEA-COMP:11605"/>
        <dbReference type="ChEBI" id="CHEBI:15378"/>
        <dbReference type="ChEBI" id="CHEBI:30013"/>
        <dbReference type="ChEBI" id="CHEBI:30616"/>
        <dbReference type="ChEBI" id="CHEBI:61977"/>
        <dbReference type="ChEBI" id="CHEBI:456216"/>
        <dbReference type="EC" id="2.7.11.1"/>
    </reaction>
</comment>
<comment type="activity regulation">
    <text>Two specific sites, one in the kinase domain (Thr-320) and the other in the C-terminal regulatory region (Ser-486), need to be phosphorylated for its full activation.</text>
</comment>
<comment type="subunit">
    <text evidence="1">Interacts with GSK3B and FLII. Interacts with PDPK1 in a phosphorylation-dependent manner.</text>
</comment>
<comment type="subcellular location">
    <subcellularLocation>
        <location evidence="14">Cytoplasmic vesicle</location>
    </subcellularLocation>
    <subcellularLocation>
        <location evidence="14">Early endosome</location>
    </subcellularLocation>
    <subcellularLocation>
        <location evidence="1">Recycling endosome</location>
    </subcellularLocation>
    <text evidence="1">Endosomal localization is a prerequisite for complete kinase activity. It is essential for its colocalization with the kinase responsible for phosphorylating Ser-486 thus allowing PDPK1 phosphorylation of Thr-320 resulting in complete activation of SGK3. Colocalizes with SLC9A3/NHE3 in the recycling endosomes (By similarity). Localized in vesicle-like structures and in the early endosome.</text>
</comment>
<comment type="tissue specificity">
    <text>Widely expressed, predominantly in the heart, spleen and 7-day embryo.</text>
</comment>
<comment type="PTM">
    <text evidence="1">Activated by phosphorylation on Ser-486 by an unknown kinase (may be mTORC2 but not confirmed), transforming it into a substrate for PDPK1 which then phosphorylates it on Thr-320.</text>
</comment>
<comment type="similarity">
    <text evidence="15">Belongs to the protein kinase superfamily. AGC Ser/Thr protein kinase family.</text>
</comment>